<name>EX7L_PECCP</name>
<sequence>MSQFPSSAIFTVSRLNQTVRQLLEMEMGQIWLSGEISNLSQPSSGHWYFTLKDERAQVRCAMFRTSNRRVTFRPQNGQQVLIRATITLYEPRGDYQLLAESMQPAGDGLLQQQFEQLKQKLAAEGLFDQQFKQVLPSPAKQVGVITSASGAALHDILQVLQRRDPSLPVIVYPTSVQGADAPLQIVRAIELANQREECDVLIVGRGGGSLEDLWSFNDERVARAIFASRIPIVSAVGHETDVTIADFVGDLRAPTPSAAAELVSRNQLELLRQIQSQRQRLEMAMDYYLAQRNREFTRLHHRLQQQHPQLRLARQQAQLVKLRQRLDDAMQQQLRQTLRRSERLQQRLMQQQPQTRIHRAQQRLQQLSYQMQSAVERQLNQNKQKLGIACSRLEGVSPLATLARGYNVTTAPDGKVLKNVTQITPGETLKTRLQDGWVESQVTTLVPNPSSVKKRRKPSSQS</sequence>
<dbReference type="EC" id="3.1.11.6" evidence="1"/>
<dbReference type="EMBL" id="CP001657">
    <property type="protein sequence ID" value="ACT14028.1"/>
    <property type="molecule type" value="Genomic_DNA"/>
</dbReference>
<dbReference type="RefSeq" id="WP_015841182.1">
    <property type="nucleotide sequence ID" value="NC_012917.1"/>
</dbReference>
<dbReference type="SMR" id="C6DBG5"/>
<dbReference type="STRING" id="561230.PC1_3005"/>
<dbReference type="KEGG" id="pct:PC1_3005"/>
<dbReference type="eggNOG" id="COG1570">
    <property type="taxonomic scope" value="Bacteria"/>
</dbReference>
<dbReference type="HOGENOM" id="CLU_023625_3_1_6"/>
<dbReference type="OrthoDB" id="9802795at2"/>
<dbReference type="Proteomes" id="UP000002736">
    <property type="component" value="Chromosome"/>
</dbReference>
<dbReference type="GO" id="GO:0005737">
    <property type="term" value="C:cytoplasm"/>
    <property type="evidence" value="ECO:0007669"/>
    <property type="project" value="UniProtKB-SubCell"/>
</dbReference>
<dbReference type="GO" id="GO:0009318">
    <property type="term" value="C:exodeoxyribonuclease VII complex"/>
    <property type="evidence" value="ECO:0007669"/>
    <property type="project" value="InterPro"/>
</dbReference>
<dbReference type="GO" id="GO:0008855">
    <property type="term" value="F:exodeoxyribonuclease VII activity"/>
    <property type="evidence" value="ECO:0007669"/>
    <property type="project" value="UniProtKB-UniRule"/>
</dbReference>
<dbReference type="GO" id="GO:0003676">
    <property type="term" value="F:nucleic acid binding"/>
    <property type="evidence" value="ECO:0007669"/>
    <property type="project" value="InterPro"/>
</dbReference>
<dbReference type="GO" id="GO:0006308">
    <property type="term" value="P:DNA catabolic process"/>
    <property type="evidence" value="ECO:0007669"/>
    <property type="project" value="UniProtKB-UniRule"/>
</dbReference>
<dbReference type="CDD" id="cd04489">
    <property type="entry name" value="ExoVII_LU_OBF"/>
    <property type="match status" value="1"/>
</dbReference>
<dbReference type="HAMAP" id="MF_00378">
    <property type="entry name" value="Exonuc_7_L"/>
    <property type="match status" value="1"/>
</dbReference>
<dbReference type="InterPro" id="IPR003753">
    <property type="entry name" value="Exonuc_VII_L"/>
</dbReference>
<dbReference type="InterPro" id="IPR020579">
    <property type="entry name" value="Exonuc_VII_lsu_C"/>
</dbReference>
<dbReference type="InterPro" id="IPR025824">
    <property type="entry name" value="OB-fold_nuc-bd_dom"/>
</dbReference>
<dbReference type="NCBIfam" id="TIGR00237">
    <property type="entry name" value="xseA"/>
    <property type="match status" value="1"/>
</dbReference>
<dbReference type="PANTHER" id="PTHR30008">
    <property type="entry name" value="EXODEOXYRIBONUCLEASE 7 LARGE SUBUNIT"/>
    <property type="match status" value="1"/>
</dbReference>
<dbReference type="PANTHER" id="PTHR30008:SF0">
    <property type="entry name" value="EXODEOXYRIBONUCLEASE 7 LARGE SUBUNIT"/>
    <property type="match status" value="1"/>
</dbReference>
<dbReference type="Pfam" id="PF02601">
    <property type="entry name" value="Exonuc_VII_L"/>
    <property type="match status" value="1"/>
</dbReference>
<dbReference type="Pfam" id="PF13742">
    <property type="entry name" value="tRNA_anti_2"/>
    <property type="match status" value="1"/>
</dbReference>
<evidence type="ECO:0000255" key="1">
    <source>
        <dbReference type="HAMAP-Rule" id="MF_00378"/>
    </source>
</evidence>
<protein>
    <recommendedName>
        <fullName evidence="1">Exodeoxyribonuclease 7 large subunit</fullName>
        <ecNumber evidence="1">3.1.11.6</ecNumber>
    </recommendedName>
    <alternativeName>
        <fullName evidence="1">Exodeoxyribonuclease VII large subunit</fullName>
        <shortName evidence="1">Exonuclease VII large subunit</shortName>
    </alternativeName>
</protein>
<feature type="chain" id="PRO_1000205679" description="Exodeoxyribonuclease 7 large subunit">
    <location>
        <begin position="1"/>
        <end position="462"/>
    </location>
</feature>
<gene>
    <name evidence="1" type="primary">xseA</name>
    <name type="ordered locus">PC1_3005</name>
</gene>
<organism>
    <name type="scientific">Pectobacterium carotovorum subsp. carotovorum (strain PC1)</name>
    <dbReference type="NCBI Taxonomy" id="561230"/>
    <lineage>
        <taxon>Bacteria</taxon>
        <taxon>Pseudomonadati</taxon>
        <taxon>Pseudomonadota</taxon>
        <taxon>Gammaproteobacteria</taxon>
        <taxon>Enterobacterales</taxon>
        <taxon>Pectobacteriaceae</taxon>
        <taxon>Pectobacterium</taxon>
    </lineage>
</organism>
<accession>C6DBG5</accession>
<keyword id="KW-0963">Cytoplasm</keyword>
<keyword id="KW-0269">Exonuclease</keyword>
<keyword id="KW-0378">Hydrolase</keyword>
<keyword id="KW-0540">Nuclease</keyword>
<comment type="function">
    <text evidence="1">Bidirectionally degrades single-stranded DNA into large acid-insoluble oligonucleotides, which are then degraded further into small acid-soluble oligonucleotides.</text>
</comment>
<comment type="catalytic activity">
    <reaction evidence="1">
        <text>Exonucleolytic cleavage in either 5'- to 3'- or 3'- to 5'-direction to yield nucleoside 5'-phosphates.</text>
        <dbReference type="EC" id="3.1.11.6"/>
    </reaction>
</comment>
<comment type="subunit">
    <text evidence="1">Heterooligomer composed of large and small subunits.</text>
</comment>
<comment type="subcellular location">
    <subcellularLocation>
        <location evidence="1">Cytoplasm</location>
    </subcellularLocation>
</comment>
<comment type="similarity">
    <text evidence="1">Belongs to the XseA family.</text>
</comment>
<reference key="1">
    <citation type="submission" date="2009-07" db="EMBL/GenBank/DDBJ databases">
        <title>Complete sequence of Pectobacterium carotovorum subsp. carotovorum PC1.</title>
        <authorList>
            <consortium name="US DOE Joint Genome Institute"/>
            <person name="Lucas S."/>
            <person name="Copeland A."/>
            <person name="Lapidus A."/>
            <person name="Glavina del Rio T."/>
            <person name="Tice H."/>
            <person name="Bruce D."/>
            <person name="Goodwin L."/>
            <person name="Pitluck S."/>
            <person name="Munk A.C."/>
            <person name="Brettin T."/>
            <person name="Detter J.C."/>
            <person name="Han C."/>
            <person name="Tapia R."/>
            <person name="Larimer F."/>
            <person name="Land M."/>
            <person name="Hauser L."/>
            <person name="Kyrpides N."/>
            <person name="Mikhailova N."/>
            <person name="Balakrishnan V."/>
            <person name="Glasner J."/>
            <person name="Perna N.T."/>
        </authorList>
    </citation>
    <scope>NUCLEOTIDE SEQUENCE [LARGE SCALE GENOMIC DNA]</scope>
    <source>
        <strain>PC1</strain>
    </source>
</reference>
<proteinExistence type="inferred from homology"/>